<comment type="function">
    <text evidence="1 5">ATP-dependent serine protease that mediates the selective degradation of mutant and abnormal proteins as well as certain short-lived regulatory proteins. Required for cellular homeostasis and for survival from DNA damage and developmental changes induced by stress. Degrades polypeptides processively to yield small peptide fragments that are 5 to 10 amino acids long. Binds to DNA in a double-stranded, site-specific manner (By similarity). CcrM is an important target of the Lon protease pathway in C.crescentus.</text>
</comment>
<comment type="catalytic activity">
    <reaction evidence="1">
        <text>Hydrolysis of proteins in presence of ATP.</text>
        <dbReference type="EC" id="3.4.21.53"/>
    </reaction>
</comment>
<comment type="subunit">
    <text evidence="1">Homohexamer. Organized in a ring with a central cavity.</text>
</comment>
<comment type="subcellular location">
    <subcellularLocation>
        <location>Cytoplasm</location>
    </subcellularLocation>
</comment>
<comment type="induction">
    <text evidence="1 5">Constitutively expressed at a constant level throughout the cell cycle (at protein level) (PubMed:8666236). By heat shock.</text>
</comment>
<comment type="disruption phenotype">
    <text evidence="5">Cells grow more slowly, cells stall in predivisional stage, about half eventually divide. Abnormal initiation of extra rounds of DNA replication. CcrM methyltransferase is present at all stages of the cell cycle, at least partially responsible for the above phenotypes.</text>
</comment>
<comment type="similarity">
    <text evidence="1">Belongs to the peptidase S16 family.</text>
</comment>
<protein>
    <recommendedName>
        <fullName evidence="1">Lon protease</fullName>
        <ecNumber evidence="1">3.4.21.53</ecNumber>
    </recommendedName>
    <alternativeName>
        <fullName evidence="1">ATP-dependent protease La</fullName>
    </alternativeName>
</protein>
<dbReference type="EC" id="3.4.21.53" evidence="1"/>
<dbReference type="EMBL" id="U56652">
    <property type="protein sequence ID" value="AAB18765.1"/>
    <property type="molecule type" value="Genomic_DNA"/>
</dbReference>
<dbReference type="EMBL" id="CP001340">
    <property type="protein sequence ID" value="ACL95502.1"/>
    <property type="molecule type" value="Genomic_DNA"/>
</dbReference>
<dbReference type="RefSeq" id="WP_010919826.1">
    <property type="nucleotide sequence ID" value="NC_011916.1"/>
</dbReference>
<dbReference type="RefSeq" id="YP_002517410.1">
    <property type="nucleotide sequence ID" value="NC_011916.1"/>
</dbReference>
<dbReference type="SMR" id="B8GX12"/>
<dbReference type="MEROPS" id="S16.001"/>
<dbReference type="GeneID" id="7333368"/>
<dbReference type="KEGG" id="ccs:CCNA_02037"/>
<dbReference type="PATRIC" id="fig|565050.3.peg.1995"/>
<dbReference type="HOGENOM" id="CLU_004109_4_3_5"/>
<dbReference type="OrthoDB" id="9803599at2"/>
<dbReference type="PhylomeDB" id="B8GX12"/>
<dbReference type="Proteomes" id="UP000001364">
    <property type="component" value="Chromosome"/>
</dbReference>
<dbReference type="GO" id="GO:0005737">
    <property type="term" value="C:cytoplasm"/>
    <property type="evidence" value="ECO:0007669"/>
    <property type="project" value="UniProtKB-SubCell"/>
</dbReference>
<dbReference type="GO" id="GO:0005524">
    <property type="term" value="F:ATP binding"/>
    <property type="evidence" value="ECO:0007669"/>
    <property type="project" value="UniProtKB-UniRule"/>
</dbReference>
<dbReference type="GO" id="GO:0016887">
    <property type="term" value="F:ATP hydrolysis activity"/>
    <property type="evidence" value="ECO:0007669"/>
    <property type="project" value="UniProtKB-UniRule"/>
</dbReference>
<dbReference type="GO" id="GO:0004176">
    <property type="term" value="F:ATP-dependent peptidase activity"/>
    <property type="evidence" value="ECO:0007669"/>
    <property type="project" value="UniProtKB-UniRule"/>
</dbReference>
<dbReference type="GO" id="GO:0043565">
    <property type="term" value="F:sequence-specific DNA binding"/>
    <property type="evidence" value="ECO:0007669"/>
    <property type="project" value="UniProtKB-UniRule"/>
</dbReference>
<dbReference type="GO" id="GO:0004252">
    <property type="term" value="F:serine-type endopeptidase activity"/>
    <property type="evidence" value="ECO:0007669"/>
    <property type="project" value="UniProtKB-UniRule"/>
</dbReference>
<dbReference type="GO" id="GO:0034605">
    <property type="term" value="P:cellular response to heat"/>
    <property type="evidence" value="ECO:0007669"/>
    <property type="project" value="UniProtKB-UniRule"/>
</dbReference>
<dbReference type="GO" id="GO:0006515">
    <property type="term" value="P:protein quality control for misfolded or incompletely synthesized proteins"/>
    <property type="evidence" value="ECO:0007669"/>
    <property type="project" value="UniProtKB-UniRule"/>
</dbReference>
<dbReference type="CDD" id="cd19500">
    <property type="entry name" value="RecA-like_Lon"/>
    <property type="match status" value="1"/>
</dbReference>
<dbReference type="FunFam" id="1.20.58.1480:FF:000001">
    <property type="entry name" value="Lon protease"/>
    <property type="match status" value="1"/>
</dbReference>
<dbReference type="FunFam" id="1.20.5.5270:FF:000002">
    <property type="entry name" value="Lon protease homolog"/>
    <property type="match status" value="1"/>
</dbReference>
<dbReference type="FunFam" id="3.40.50.300:FF:000021">
    <property type="entry name" value="Lon protease homolog"/>
    <property type="match status" value="1"/>
</dbReference>
<dbReference type="Gene3D" id="1.10.8.60">
    <property type="match status" value="1"/>
</dbReference>
<dbReference type="Gene3D" id="1.20.5.5270">
    <property type="match status" value="1"/>
</dbReference>
<dbReference type="Gene3D" id="1.20.58.1480">
    <property type="match status" value="1"/>
</dbReference>
<dbReference type="Gene3D" id="3.30.230.10">
    <property type="match status" value="1"/>
</dbReference>
<dbReference type="Gene3D" id="2.30.130.40">
    <property type="entry name" value="LON domain-like"/>
    <property type="match status" value="1"/>
</dbReference>
<dbReference type="Gene3D" id="3.40.50.300">
    <property type="entry name" value="P-loop containing nucleotide triphosphate hydrolases"/>
    <property type="match status" value="1"/>
</dbReference>
<dbReference type="HAMAP" id="MF_01973">
    <property type="entry name" value="lon_bact"/>
    <property type="match status" value="1"/>
</dbReference>
<dbReference type="InterPro" id="IPR003593">
    <property type="entry name" value="AAA+_ATPase"/>
</dbReference>
<dbReference type="InterPro" id="IPR003959">
    <property type="entry name" value="ATPase_AAA_core"/>
</dbReference>
<dbReference type="InterPro" id="IPR027543">
    <property type="entry name" value="Lon_bac"/>
</dbReference>
<dbReference type="InterPro" id="IPR004815">
    <property type="entry name" value="Lon_bac/euk-typ"/>
</dbReference>
<dbReference type="InterPro" id="IPR054594">
    <property type="entry name" value="Lon_lid"/>
</dbReference>
<dbReference type="InterPro" id="IPR008269">
    <property type="entry name" value="Lon_proteolytic"/>
</dbReference>
<dbReference type="InterPro" id="IPR027065">
    <property type="entry name" value="Lon_Prtase"/>
</dbReference>
<dbReference type="InterPro" id="IPR003111">
    <property type="entry name" value="Lon_prtase_N"/>
</dbReference>
<dbReference type="InterPro" id="IPR046336">
    <property type="entry name" value="Lon_prtase_N_sf"/>
</dbReference>
<dbReference type="InterPro" id="IPR027417">
    <property type="entry name" value="P-loop_NTPase"/>
</dbReference>
<dbReference type="InterPro" id="IPR008268">
    <property type="entry name" value="Peptidase_S16_AS"/>
</dbReference>
<dbReference type="InterPro" id="IPR015947">
    <property type="entry name" value="PUA-like_sf"/>
</dbReference>
<dbReference type="InterPro" id="IPR020568">
    <property type="entry name" value="Ribosomal_Su5_D2-typ_SF"/>
</dbReference>
<dbReference type="InterPro" id="IPR014721">
    <property type="entry name" value="Ribsml_uS5_D2-typ_fold_subgr"/>
</dbReference>
<dbReference type="NCBIfam" id="TIGR00763">
    <property type="entry name" value="lon"/>
    <property type="match status" value="1"/>
</dbReference>
<dbReference type="NCBIfam" id="NF008053">
    <property type="entry name" value="PRK10787.1"/>
    <property type="match status" value="1"/>
</dbReference>
<dbReference type="PANTHER" id="PTHR10046">
    <property type="entry name" value="ATP DEPENDENT LON PROTEASE FAMILY MEMBER"/>
    <property type="match status" value="1"/>
</dbReference>
<dbReference type="Pfam" id="PF00004">
    <property type="entry name" value="AAA"/>
    <property type="match status" value="1"/>
</dbReference>
<dbReference type="Pfam" id="PF05362">
    <property type="entry name" value="Lon_C"/>
    <property type="match status" value="1"/>
</dbReference>
<dbReference type="Pfam" id="PF22667">
    <property type="entry name" value="Lon_lid"/>
    <property type="match status" value="1"/>
</dbReference>
<dbReference type="Pfam" id="PF02190">
    <property type="entry name" value="LON_substr_bdg"/>
    <property type="match status" value="1"/>
</dbReference>
<dbReference type="PIRSF" id="PIRSF001174">
    <property type="entry name" value="Lon_proteas"/>
    <property type="match status" value="1"/>
</dbReference>
<dbReference type="PRINTS" id="PR00830">
    <property type="entry name" value="ENDOLAPTASE"/>
</dbReference>
<dbReference type="SMART" id="SM00382">
    <property type="entry name" value="AAA"/>
    <property type="match status" value="1"/>
</dbReference>
<dbReference type="SMART" id="SM00464">
    <property type="entry name" value="LON"/>
    <property type="match status" value="1"/>
</dbReference>
<dbReference type="SUPFAM" id="SSF52540">
    <property type="entry name" value="P-loop containing nucleoside triphosphate hydrolases"/>
    <property type="match status" value="1"/>
</dbReference>
<dbReference type="SUPFAM" id="SSF88697">
    <property type="entry name" value="PUA domain-like"/>
    <property type="match status" value="1"/>
</dbReference>
<dbReference type="SUPFAM" id="SSF54211">
    <property type="entry name" value="Ribosomal protein S5 domain 2-like"/>
    <property type="match status" value="1"/>
</dbReference>
<dbReference type="PROSITE" id="PS51787">
    <property type="entry name" value="LON_N"/>
    <property type="match status" value="1"/>
</dbReference>
<dbReference type="PROSITE" id="PS51786">
    <property type="entry name" value="LON_PROTEOLYTIC"/>
    <property type="match status" value="1"/>
</dbReference>
<dbReference type="PROSITE" id="PS01046">
    <property type="entry name" value="LON_SER"/>
    <property type="match status" value="1"/>
</dbReference>
<keyword id="KW-0067">ATP-binding</keyword>
<keyword id="KW-0963">Cytoplasm</keyword>
<keyword id="KW-0378">Hydrolase</keyword>
<keyword id="KW-0547">Nucleotide-binding</keyword>
<keyword id="KW-0645">Protease</keyword>
<keyword id="KW-1185">Reference proteome</keyword>
<keyword id="KW-0720">Serine protease</keyword>
<keyword id="KW-0346">Stress response</keyword>
<accession>B8GX12</accession>
<accession>P52977</accession>
<gene>
    <name evidence="1" type="primary">lon</name>
    <name type="ordered locus">CCNA_02037</name>
</gene>
<organism>
    <name type="scientific">Caulobacter vibrioides (strain NA1000 / CB15N)</name>
    <name type="common">Caulobacter crescentus</name>
    <dbReference type="NCBI Taxonomy" id="565050"/>
    <lineage>
        <taxon>Bacteria</taxon>
        <taxon>Pseudomonadati</taxon>
        <taxon>Pseudomonadota</taxon>
        <taxon>Alphaproteobacteria</taxon>
        <taxon>Caulobacterales</taxon>
        <taxon>Caulobacteraceae</taxon>
        <taxon>Caulobacter</taxon>
    </lineage>
</organism>
<name>LON_CAUVN</name>
<reference key="1">
    <citation type="journal article" date="1996" name="Genes Dev.">
        <title>Caulobacter Lon protease has a critical role in cell-cycle control of DNA methylation.</title>
        <authorList>
            <person name="Wright R.J."/>
            <person name="Stephens C."/>
            <person name="Zweiger G."/>
            <person name="Shapiro L."/>
            <person name="Alley M.K.R."/>
        </authorList>
    </citation>
    <scope>NUCLEOTIDE SEQUENCE [GENOMIC DNA]</scope>
    <scope>FUNCTION</scope>
    <scope>INDUCTION</scope>
    <scope>DISRUPTION PHENOTYPE</scope>
    <source>
        <strain>NA1000 / CB15N</strain>
    </source>
</reference>
<reference key="2">
    <citation type="journal article" date="2010" name="J. Bacteriol.">
        <title>The genetic basis of laboratory adaptation in Caulobacter crescentus.</title>
        <authorList>
            <person name="Marks M.E."/>
            <person name="Castro-Rojas C.M."/>
            <person name="Teiling C."/>
            <person name="Du L."/>
            <person name="Kapatral V."/>
            <person name="Walunas T.L."/>
            <person name="Crosson S."/>
        </authorList>
    </citation>
    <scope>NUCLEOTIDE SEQUENCE [LARGE SCALE GENOMIC DNA]</scope>
    <source>
        <strain>NA1000 / CB15N</strain>
    </source>
</reference>
<proteinExistence type="evidence at protein level"/>
<evidence type="ECO:0000255" key="1">
    <source>
        <dbReference type="HAMAP-Rule" id="MF_01973"/>
    </source>
</evidence>
<evidence type="ECO:0000255" key="2">
    <source>
        <dbReference type="PROSITE-ProRule" id="PRU01122"/>
    </source>
</evidence>
<evidence type="ECO:0000255" key="3">
    <source>
        <dbReference type="PROSITE-ProRule" id="PRU01123"/>
    </source>
</evidence>
<evidence type="ECO:0000256" key="4">
    <source>
        <dbReference type="SAM" id="MobiDB-lite"/>
    </source>
</evidence>
<evidence type="ECO:0000269" key="5">
    <source>
    </source>
</evidence>
<evidence type="ECO:0000305" key="6"/>
<sequence length="799" mass="88244">MSELRTLPVLPLRDIVVFPHMVVPLFVGRDKSVRALEEVMRGDKQILLVTQKNSADDDPAPGDIFEVGVLATVLQLLKLPDGTVKVLVEGKARAAVVSFTDQESYYEAQIGEVSEDDGAGPEAEALSRAVVEQFENYVKLNKKVPPEALASIPQIAEPGKLADSIAAHLSVKIGDKQNLLEIFDVVKRLEKVFALMEGEISVLQVEKKIRSRVKRQMEKTQREYYLNEQMKAIQRELGDPDDARDELIDLEKRIKKTKLSKEARTKAESELKKLRNMSPMSAESTVVRNYLDWLLSIPWGKAKTKKIDLVESEGILDADHYGLEKVKERILEYLAVQARTNSLKGPILCLVGPPGVGKTSLGKSIAKATGREFVRMSLGGVRDEAEIRGHRRTYIGSMPGKVVQSMKKAKTTNAFVLLDEIDKMGSDYRGDPASALLEVLDPSQNSTFGDHYLEVDYDLSQVMFVTTANSLNMPQPLLDRMEIIRIPGYTEDEKLEIAKRHILPKLAKDHGLKPAEFIVPDKAIRDLIRYYTREAGVRSLERELGALARKTVRDLAREKVASITIDDERLAKYAGVKKYRYGETDEVDQVGIVTGLAWTEFGGDILTIEAVKMPGKGRMQITGNLKDVMKESIAAANSYVRSRALQFGIKPPVFEKTDVHIHVPDGATPKDGPSAGIAMALAMVSVLTGIPIRKDIAMTGEITLRGRVTAIGGLKEKLLAALRSGVKTVLIPQENEKDLADVPQTVKDGLEIIPVSTVDEVLKHALTGPLTPVEWNEAEEPITTSAKKDDGDSDAMLTH</sequence>
<feature type="chain" id="PRO_0000378303" description="Lon protease">
    <location>
        <begin position="1"/>
        <end position="799"/>
    </location>
</feature>
<feature type="domain" description="Lon N-terminal" evidence="3">
    <location>
        <begin position="7"/>
        <end position="200"/>
    </location>
</feature>
<feature type="domain" description="Lon proteolytic" evidence="2">
    <location>
        <begin position="587"/>
        <end position="768"/>
    </location>
</feature>
<feature type="region of interest" description="Disordered" evidence="4">
    <location>
        <begin position="772"/>
        <end position="799"/>
    </location>
</feature>
<feature type="active site" evidence="1">
    <location>
        <position position="674"/>
    </location>
</feature>
<feature type="active site" evidence="1">
    <location>
        <position position="717"/>
    </location>
</feature>
<feature type="binding site" evidence="1">
    <location>
        <begin position="352"/>
        <end position="359"/>
    </location>
    <ligand>
        <name>ATP</name>
        <dbReference type="ChEBI" id="CHEBI:30616"/>
    </ligand>
</feature>
<feature type="sequence conflict" description="In Ref. 1; AAB18765." evidence="6" ref="1">
    <original>A</original>
    <variation>G</variation>
    <location>
        <position position="125"/>
    </location>
</feature>
<feature type="sequence conflict" description="In Ref. 1; AAB18765." evidence="6" ref="1">
    <original>A</original>
    <variation>R</variation>
    <location>
        <position position="166"/>
    </location>
</feature>
<feature type="sequence conflict" description="In Ref. 1; AAB18765." evidence="6" ref="1">
    <original>D</original>
    <variation>E</variation>
    <location>
        <position position="458"/>
    </location>
</feature>